<organism>
    <name type="scientific">Entamoeba histolytica (strain ATCC 30459 / HM-1:IMSS / ABRM)</name>
    <dbReference type="NCBI Taxonomy" id="294381"/>
    <lineage>
        <taxon>Eukaryota</taxon>
        <taxon>Amoebozoa</taxon>
        <taxon>Evosea</taxon>
        <taxon>Archamoebae</taxon>
        <taxon>Mastigamoebida</taxon>
        <taxon>Entamoebidae</taxon>
        <taxon>Entamoeba</taxon>
    </lineage>
</organism>
<evidence type="ECO:0000255" key="1">
    <source>
        <dbReference type="HAMAP-Rule" id="MF_03144"/>
    </source>
</evidence>
<accession>C4M244</accession>
<feature type="chain" id="PRO_0000407231" description="RNA-splicing ligase RtcB homolog 1">
    <location>
        <begin position="1"/>
        <end position="524"/>
    </location>
</feature>
<feature type="active site" description="GMP-histidine intermediate" evidence="1">
    <location>
        <position position="447"/>
    </location>
</feature>
<feature type="binding site" evidence="1">
    <location>
        <position position="141"/>
    </location>
    <ligand>
        <name>Mn(2+)</name>
        <dbReference type="ChEBI" id="CHEBI:29035"/>
        <label>1</label>
    </ligand>
</feature>
<feature type="binding site" evidence="1">
    <location>
        <position position="144"/>
    </location>
    <ligand>
        <name>Mn(2+)</name>
        <dbReference type="ChEBI" id="CHEBI:29035"/>
        <label>1</label>
    </ligand>
</feature>
<feature type="binding site" evidence="1">
    <location>
        <position position="144"/>
    </location>
    <ligand>
        <name>Mn(2+)</name>
        <dbReference type="ChEBI" id="CHEBI:29035"/>
        <label>2</label>
    </ligand>
</feature>
<feature type="binding site" evidence="1">
    <location>
        <begin position="248"/>
        <end position="252"/>
    </location>
    <ligand>
        <name>GMP</name>
        <dbReference type="ChEBI" id="CHEBI:58115"/>
    </ligand>
</feature>
<feature type="binding site" evidence="1">
    <location>
        <position position="249"/>
    </location>
    <ligand>
        <name>Mn(2+)</name>
        <dbReference type="ChEBI" id="CHEBI:29035"/>
        <label>1</label>
    </ligand>
</feature>
<feature type="binding site" evidence="1">
    <location>
        <position position="281"/>
    </location>
    <ligand>
        <name>Mn(2+)</name>
        <dbReference type="ChEBI" id="CHEBI:29035"/>
        <label>2</label>
    </ligand>
</feature>
<feature type="binding site" evidence="1">
    <location>
        <begin position="372"/>
        <end position="373"/>
    </location>
    <ligand>
        <name>GMP</name>
        <dbReference type="ChEBI" id="CHEBI:58115"/>
    </ligand>
</feature>
<feature type="binding site" evidence="1">
    <location>
        <position position="372"/>
    </location>
    <ligand>
        <name>Mn(2+)</name>
        <dbReference type="ChEBI" id="CHEBI:29035"/>
        <label>2</label>
    </ligand>
</feature>
<feature type="binding site" evidence="1">
    <location>
        <begin position="421"/>
        <end position="424"/>
    </location>
    <ligand>
        <name>GMP</name>
        <dbReference type="ChEBI" id="CHEBI:58115"/>
    </ligand>
</feature>
<feature type="binding site" evidence="1">
    <location>
        <position position="428"/>
    </location>
    <ligand>
        <name>GMP</name>
        <dbReference type="ChEBI" id="CHEBI:58115"/>
    </ligand>
</feature>
<feature type="binding site" evidence="1">
    <location>
        <begin position="447"/>
        <end position="450"/>
    </location>
    <ligand>
        <name>GMP</name>
        <dbReference type="ChEBI" id="CHEBI:58115"/>
    </ligand>
</feature>
<feature type="binding site" evidence="1">
    <location>
        <position position="523"/>
    </location>
    <ligand>
        <name>GMP</name>
        <dbReference type="ChEBI" id="CHEBI:58115"/>
    </ligand>
</feature>
<proteinExistence type="inferred from homology"/>
<reference key="1">
    <citation type="journal article" date="2005" name="Nature">
        <title>The genome of the protist parasite Entamoeba histolytica.</title>
        <authorList>
            <person name="Loftus B.J."/>
            <person name="Anderson I."/>
            <person name="Davies R."/>
            <person name="Alsmark U.C."/>
            <person name="Samuelson J."/>
            <person name="Amedeo P."/>
            <person name="Roncaglia P."/>
            <person name="Berriman M."/>
            <person name="Hirt R.P."/>
            <person name="Mann B.J."/>
            <person name="Nozaki T."/>
            <person name="Suh B."/>
            <person name="Pop M."/>
            <person name="Duchene M."/>
            <person name="Ackers J."/>
            <person name="Tannich E."/>
            <person name="Leippe M."/>
            <person name="Hofer M."/>
            <person name="Bruchhaus I."/>
            <person name="Willhoeft U."/>
            <person name="Bhattacharya A."/>
            <person name="Chillingworth T."/>
            <person name="Churcher C.M."/>
            <person name="Hance Z."/>
            <person name="Harris B."/>
            <person name="Harris D."/>
            <person name="Jagels K."/>
            <person name="Moule S."/>
            <person name="Mungall K.L."/>
            <person name="Ormond D."/>
            <person name="Squares R."/>
            <person name="Whitehead S."/>
            <person name="Quail M.A."/>
            <person name="Rabbinowitsch E."/>
            <person name="Norbertczak H."/>
            <person name="Price C."/>
            <person name="Wang Z."/>
            <person name="Guillen N."/>
            <person name="Gilchrist C."/>
            <person name="Stroup S.E."/>
            <person name="Bhattacharya S."/>
            <person name="Lohia A."/>
            <person name="Foster P.G."/>
            <person name="Sicheritz-Ponten T."/>
            <person name="Weber C."/>
            <person name="Singh U."/>
            <person name="Mukherjee C."/>
            <person name="El-Sayed N.M.A."/>
            <person name="Petri W.A."/>
            <person name="Clark C.G."/>
            <person name="Embley T.M."/>
            <person name="Barrell B.G."/>
            <person name="Fraser C.M."/>
            <person name="Hall N."/>
        </authorList>
    </citation>
    <scope>NUCLEOTIDE SEQUENCE [LARGE SCALE GENOMIC DNA]</scope>
    <source>
        <strain>ATCC 30459 / HM-1:IMSS / ABRM</strain>
    </source>
</reference>
<reference key="2">
    <citation type="journal article" date="2010" name="PLoS Negl. Trop. Dis.">
        <title>New assembly, reannotation and analysis of the Entamoeba histolytica genome reveal new genomic features and protein content information.</title>
        <authorList>
            <person name="Lorenzi H.A."/>
            <person name="Puiu D."/>
            <person name="Miller J.R."/>
            <person name="Brinkac L.M."/>
            <person name="Amedeo P."/>
            <person name="Hall N."/>
            <person name="Caler E.V."/>
        </authorList>
    </citation>
    <scope>GENOME REANNOTATION</scope>
    <source>
        <strain>ATCC 30459 / HM-1:IMSS / ABRM</strain>
    </source>
</reference>
<sequence>MSSGYKPGKKRIIQPIQPIKKELIDFHGCQIPKECEPYLERTNVSLIIKKGFINGMKNDAEMFCNEDLFELLMNELLNEQPGASFSSCVRQTANVATLPGVIKSLAMPDAHSGYGFSIGGVAAMRLDDPNAVICPGGVGFDINCGVRLLRTNLDDKDIEPHLAELADALQKNIPSGVGTTSTQTLTEKEMNEIMNEGLEWLVKKGLAWKEDLVYCEENGRIINSDPHLVSQKARGRGRNQLGTLGSGNHYLEIQRVDEIMDKEAAKQMGISHIGQICIMIHCGSRGLGHQVCQDFVDMCVSQSNKNEVDIQLTGVPFQSDNGQKYFKAMNAAANYAFANRGMISYHVRCTFEQVFQKSPKDLDMHLVYDVCHNIAKEESHLVDGKEIKCIVHRKGATRAFAPLNPVIPDAYKPIGQPAIIGGSMGTCSYMLVGTQEGMKKSFGSTCHGAGRKISRVNAMKNISSDSVVEEMKKKGIELRITDPKLAAEEADDAYKDVKEVVETCQSAGISRIVFKLKPLIVVKG</sequence>
<comment type="function">
    <text evidence="1">Catalytic subunit of the tRNA-splicing ligase complex that acts by directly joining spliced tRNA halves to mature-sized tRNAs by incorporating the precursor-derived splice junction phosphate into the mature tRNA as a canonical 3',5'-phosphodiester. May act as an RNA ligase with broad substrate specificity, and may function toward other RNAs.</text>
</comment>
<comment type="catalytic activity">
    <reaction evidence="1">
        <text>a 3'-end 3'-phospho-ribonucleotide-RNA + a 5'-end dephospho-ribonucleoside-RNA + GTP = a ribonucleotidyl-ribonucleotide-RNA + GMP + diphosphate</text>
        <dbReference type="Rhea" id="RHEA:68076"/>
        <dbReference type="Rhea" id="RHEA-COMP:10463"/>
        <dbReference type="Rhea" id="RHEA-COMP:13936"/>
        <dbReference type="Rhea" id="RHEA-COMP:17355"/>
        <dbReference type="ChEBI" id="CHEBI:33019"/>
        <dbReference type="ChEBI" id="CHEBI:37565"/>
        <dbReference type="ChEBI" id="CHEBI:58115"/>
        <dbReference type="ChEBI" id="CHEBI:83062"/>
        <dbReference type="ChEBI" id="CHEBI:138284"/>
        <dbReference type="ChEBI" id="CHEBI:173118"/>
        <dbReference type="EC" id="6.5.1.8"/>
    </reaction>
</comment>
<comment type="catalytic activity">
    <reaction evidence="1">
        <text>a 3'-end 2',3'-cyclophospho-ribonucleotide-RNA + a 5'-end dephospho-ribonucleoside-RNA + GTP + H2O = a ribonucleotidyl-ribonucleotide-RNA + GMP + diphosphate + H(+)</text>
        <dbReference type="Rhea" id="RHEA:68080"/>
        <dbReference type="Rhea" id="RHEA-COMP:10464"/>
        <dbReference type="Rhea" id="RHEA-COMP:13936"/>
        <dbReference type="Rhea" id="RHEA-COMP:17355"/>
        <dbReference type="ChEBI" id="CHEBI:15377"/>
        <dbReference type="ChEBI" id="CHEBI:15378"/>
        <dbReference type="ChEBI" id="CHEBI:33019"/>
        <dbReference type="ChEBI" id="CHEBI:37565"/>
        <dbReference type="ChEBI" id="CHEBI:58115"/>
        <dbReference type="ChEBI" id="CHEBI:83064"/>
        <dbReference type="ChEBI" id="CHEBI:138284"/>
        <dbReference type="ChEBI" id="CHEBI:173118"/>
        <dbReference type="EC" id="6.5.1.8"/>
    </reaction>
</comment>
<comment type="cofactor">
    <cofactor evidence="1">
        <name>Mn(2+)</name>
        <dbReference type="ChEBI" id="CHEBI:29035"/>
    </cofactor>
    <text evidence="1">Binds 2 manganese ions per subunit.</text>
</comment>
<comment type="subunit">
    <text evidence="1">Catalytic component of the tRNA-splicing ligase complex.</text>
</comment>
<comment type="miscellaneous">
    <text evidence="1">Ligation probably proceeds through 3 nucleotidyl transfer steps, with 2',3'-cyclic phosphate termini being hydrolyzed to 3'-P termini in a step that precedes 3'-P activation with GMP. In the first nucleotidyl transfer step, RTCB reacts with GTP to form a covalent RTCB-histidine-GMP intermediate with release of PPi; in the second step, the GMP moiety is transferred to the RNA 3'-P; in the third step, the 5'-OH from the opposite RNA strand attacks the activated 3'-P to form a 3',5'-phosphodiester bond and release GMP.</text>
</comment>
<comment type="similarity">
    <text evidence="1">Belongs to the RtcB family.</text>
</comment>
<dbReference type="EC" id="6.5.1.8" evidence="1"/>
<dbReference type="EMBL" id="DS571219">
    <property type="protein sequence ID" value="EAL45814.1"/>
    <property type="molecule type" value="Genomic_DNA"/>
</dbReference>
<dbReference type="RefSeq" id="XP_651200.1">
    <property type="nucleotide sequence ID" value="XM_646108.1"/>
</dbReference>
<dbReference type="SMR" id="C4M244"/>
<dbReference type="FunCoup" id="C4M244">
    <property type="interactions" value="270"/>
</dbReference>
<dbReference type="STRING" id="5759.C4M244"/>
<dbReference type="GeneID" id="3405505"/>
<dbReference type="KEGG" id="ehi:EHI_169260"/>
<dbReference type="VEuPathDB" id="AmoebaDB:EHI5A_164830"/>
<dbReference type="VEuPathDB" id="AmoebaDB:EHI7A_138550"/>
<dbReference type="VEuPathDB" id="AmoebaDB:EHI8A_153420"/>
<dbReference type="VEuPathDB" id="AmoebaDB:EHI_169260"/>
<dbReference type="VEuPathDB" id="AmoebaDB:KM1_197480"/>
<dbReference type="eggNOG" id="KOG3833">
    <property type="taxonomic scope" value="Eukaryota"/>
</dbReference>
<dbReference type="InParanoid" id="C4M244"/>
<dbReference type="OMA" id="QTRGVEC"/>
<dbReference type="OrthoDB" id="10249697at2759"/>
<dbReference type="Proteomes" id="UP000001926">
    <property type="component" value="Partially assembled WGS sequence"/>
</dbReference>
<dbReference type="GO" id="GO:0005634">
    <property type="term" value="C:nucleus"/>
    <property type="evidence" value="ECO:0000318"/>
    <property type="project" value="GO_Central"/>
</dbReference>
<dbReference type="GO" id="GO:0072669">
    <property type="term" value="C:tRNA-splicing ligase complex"/>
    <property type="evidence" value="ECO:0000318"/>
    <property type="project" value="GO_Central"/>
</dbReference>
<dbReference type="GO" id="GO:0005525">
    <property type="term" value="F:GTP binding"/>
    <property type="evidence" value="ECO:0007669"/>
    <property type="project" value="UniProtKB-KW"/>
</dbReference>
<dbReference type="GO" id="GO:0046872">
    <property type="term" value="F:metal ion binding"/>
    <property type="evidence" value="ECO:0007669"/>
    <property type="project" value="UniProtKB-KW"/>
</dbReference>
<dbReference type="GO" id="GO:0170057">
    <property type="term" value="F:RNA ligase (GTP) activity"/>
    <property type="evidence" value="ECO:0007669"/>
    <property type="project" value="UniProtKB-EC"/>
</dbReference>
<dbReference type="GO" id="GO:0006388">
    <property type="term" value="P:tRNA splicing, via endonucleolytic cleavage and ligation"/>
    <property type="evidence" value="ECO:0000318"/>
    <property type="project" value="GO_Central"/>
</dbReference>
<dbReference type="FunFam" id="3.90.1860.10:FF:000001">
    <property type="entry name" value="tRNA-splicing ligase RtcB homolog"/>
    <property type="match status" value="1"/>
</dbReference>
<dbReference type="Gene3D" id="3.90.1860.10">
    <property type="entry name" value="tRNA-splicing ligase RtcB"/>
    <property type="match status" value="1"/>
</dbReference>
<dbReference type="HAMAP" id="MF_03144">
    <property type="entry name" value="RtcB_euk"/>
    <property type="match status" value="1"/>
</dbReference>
<dbReference type="InterPro" id="IPR001233">
    <property type="entry name" value="RtcB"/>
</dbReference>
<dbReference type="InterPro" id="IPR036025">
    <property type="entry name" value="RtcB-like_sf"/>
</dbReference>
<dbReference type="InterPro" id="IPR027513">
    <property type="entry name" value="RtcB_euk"/>
</dbReference>
<dbReference type="PANTHER" id="PTHR11118">
    <property type="entry name" value="RNA-SPLICING LIGASE RTCB HOMOLOG"/>
    <property type="match status" value="1"/>
</dbReference>
<dbReference type="PANTHER" id="PTHR11118:SF1">
    <property type="entry name" value="RNA-SPLICING LIGASE RTCB HOMOLOG"/>
    <property type="match status" value="1"/>
</dbReference>
<dbReference type="Pfam" id="PF01139">
    <property type="entry name" value="RtcB"/>
    <property type="match status" value="1"/>
</dbReference>
<dbReference type="SUPFAM" id="SSF103365">
    <property type="entry name" value="Hypothetical protein PH1602"/>
    <property type="match status" value="1"/>
</dbReference>
<protein>
    <recommendedName>
        <fullName evidence="1">RNA-splicing ligase RtcB homolog 1</fullName>
        <ecNumber evidence="1">6.5.1.8</ecNumber>
    </recommendedName>
    <alternativeName>
        <fullName evidence="1">3'-phosphate/5'-hydroxy nucleic acid ligase 1</fullName>
    </alternativeName>
</protein>
<gene>
    <name type="ORF">EHI_169260</name>
</gene>
<keyword id="KW-0342">GTP-binding</keyword>
<keyword id="KW-0436">Ligase</keyword>
<keyword id="KW-0464">Manganese</keyword>
<keyword id="KW-0479">Metal-binding</keyword>
<keyword id="KW-0547">Nucleotide-binding</keyword>
<keyword id="KW-1185">Reference proteome</keyword>
<keyword id="KW-0819">tRNA processing</keyword>
<name>RTCB1_ENTH1</name>